<proteinExistence type="evidence at protein level"/>
<dbReference type="EMBL" id="M25536">
    <property type="protein sequence ID" value="AAA34256.1"/>
    <property type="molecule type" value="mRNA"/>
</dbReference>
<dbReference type="PIR" id="S09623">
    <property type="entry name" value="S09623"/>
</dbReference>
<dbReference type="RefSeq" id="NP_001414880.1">
    <property type="nucleotide sequence ID" value="NM_001427951.1"/>
</dbReference>
<dbReference type="PDB" id="1WGC">
    <property type="method" value="X-ray"/>
    <property type="resolution" value="2.20 A"/>
    <property type="chains" value="A/B=28-197"/>
</dbReference>
<dbReference type="PDB" id="2CWG">
    <property type="method" value="X-ray"/>
    <property type="resolution" value="2.00 A"/>
    <property type="chains" value="A/B=28-197"/>
</dbReference>
<dbReference type="PDB" id="2UVO">
    <property type="method" value="X-ray"/>
    <property type="resolution" value="1.40 A"/>
    <property type="chains" value="A/B/E/F=28-197"/>
</dbReference>
<dbReference type="PDB" id="2X3T">
    <property type="method" value="X-ray"/>
    <property type="resolution" value="2.75 A"/>
    <property type="chains" value="A/B/C/D=28-197"/>
</dbReference>
<dbReference type="PDB" id="4AML">
    <property type="method" value="X-ray"/>
    <property type="resolution" value="1.60 A"/>
    <property type="chains" value="A/B=28-197"/>
</dbReference>
<dbReference type="PDB" id="7WGA">
    <property type="method" value="X-ray"/>
    <property type="resolution" value="2.00 A"/>
    <property type="chains" value="A/B=28-197"/>
</dbReference>
<dbReference type="PDB" id="8VU6">
    <property type="method" value="NMR"/>
    <property type="chains" value="A=26-68"/>
</dbReference>
<dbReference type="PDB" id="8VU7">
    <property type="method" value="NMR"/>
    <property type="chains" value="A=112-154"/>
</dbReference>
<dbReference type="PDBsum" id="1WGC"/>
<dbReference type="PDBsum" id="2CWG"/>
<dbReference type="PDBsum" id="2UVO"/>
<dbReference type="PDBsum" id="2X3T"/>
<dbReference type="PDBsum" id="4AML"/>
<dbReference type="PDBsum" id="7WGA"/>
<dbReference type="PDBsum" id="8VU6"/>
<dbReference type="PDBsum" id="8VU7"/>
<dbReference type="SMR" id="P10968"/>
<dbReference type="STRING" id="4565.P10968"/>
<dbReference type="Allergome" id="3501">
    <property type="allergen name" value="Tri a 18.0101"/>
</dbReference>
<dbReference type="Allergome" id="650">
    <property type="allergen name" value="Tri a 18"/>
</dbReference>
<dbReference type="CAZy" id="CBM18">
    <property type="family name" value="Carbohydrate-Binding Module Family 18"/>
</dbReference>
<dbReference type="UniLectin" id="P10968"/>
<dbReference type="PaxDb" id="4565-Traes_1AL_B8B0A092C.1"/>
<dbReference type="EnsemblPlants" id="TraesARI1A03G00147470.1">
    <property type="protein sequence ID" value="TraesARI1A03G00147470.1.CDS1"/>
    <property type="gene ID" value="TraesARI1A03G00147470"/>
</dbReference>
<dbReference type="EnsemblPlants" id="TraesCAD_scaffold_008297_01G000100.1">
    <property type="protein sequence ID" value="TraesCAD_scaffold_008297_01G000100.1"/>
    <property type="gene ID" value="TraesCAD_scaffold_008297_01G000100"/>
</dbReference>
<dbReference type="EnsemblPlants" id="TraesCLE_scaffold_063355_01G000600.1">
    <property type="protein sequence ID" value="TraesCLE_scaffold_063355_01G000600.1"/>
    <property type="gene ID" value="TraesCLE_scaffold_063355_01G000600"/>
</dbReference>
<dbReference type="EnsemblPlants" id="TraesCS1A02G326800.1">
    <property type="protein sequence ID" value="TraesCS1A02G326800.1.cds1"/>
    <property type="gene ID" value="TraesCS1A02G326800"/>
</dbReference>
<dbReference type="EnsemblPlants" id="TraesCS1A03G0810500.1">
    <property type="protein sequence ID" value="TraesCS1A03G0810500.1.CDS1"/>
    <property type="gene ID" value="TraesCS1A03G0810500"/>
</dbReference>
<dbReference type="EnsemblPlants" id="TraesJUL1A03G00145280.1">
    <property type="protein sequence ID" value="TraesJUL1A03G00145280.1.CDS1"/>
    <property type="gene ID" value="TraesJUL1A03G00145280"/>
</dbReference>
<dbReference type="EnsemblPlants" id="TraesKAR1A01G0324550.1">
    <property type="protein sequence ID" value="cds.TraesKAR1A01G0324550.1"/>
    <property type="gene ID" value="TraesKAR1A01G0324550"/>
</dbReference>
<dbReference type="EnsemblPlants" id="TraesMAC1A03G00143530.1">
    <property type="protein sequence ID" value="TraesMAC1A03G00143530.1.CDS1"/>
    <property type="gene ID" value="TraesMAC1A03G00143530"/>
</dbReference>
<dbReference type="EnsemblPlants" id="TraesNOR1A03G00143170.1">
    <property type="protein sequence ID" value="TraesNOR1A03G00143170.1.CDS1"/>
    <property type="gene ID" value="TraesNOR1A03G00143170"/>
</dbReference>
<dbReference type="EnsemblPlants" id="TraesROB_scaffold_060582_01G000700.1">
    <property type="protein sequence ID" value="TraesROB_scaffold_060582_01G000700.1"/>
    <property type="gene ID" value="TraesROB_scaffold_060582_01G000700"/>
</dbReference>
<dbReference type="EnsemblPlants" id="TraesSYM1A03G00145820.1">
    <property type="protein sequence ID" value="TraesSYM1A03G00145820.1.CDS1"/>
    <property type="gene ID" value="TraesSYM1A03G00145820"/>
</dbReference>
<dbReference type="EnsemblPlants" id="TraesWEE_scaffold_003839_01G001400.1">
    <property type="protein sequence ID" value="TraesWEE_scaffold_003839_01G001400.1"/>
    <property type="gene ID" value="TraesWEE_scaffold_003839_01G001400"/>
</dbReference>
<dbReference type="GeneID" id="543215"/>
<dbReference type="Gramene" id="TraesARI1A03G00147470.1">
    <property type="protein sequence ID" value="TraesARI1A03G00147470.1.CDS1"/>
    <property type="gene ID" value="TraesARI1A03G00147470"/>
</dbReference>
<dbReference type="Gramene" id="TraesCAD_scaffold_008297_01G000100.1">
    <property type="protein sequence ID" value="TraesCAD_scaffold_008297_01G000100.1"/>
    <property type="gene ID" value="TraesCAD_scaffold_008297_01G000100"/>
</dbReference>
<dbReference type="Gramene" id="TraesCLE_scaffold_063355_01G000600.1">
    <property type="protein sequence ID" value="TraesCLE_scaffold_063355_01G000600.1"/>
    <property type="gene ID" value="TraesCLE_scaffold_063355_01G000600"/>
</dbReference>
<dbReference type="Gramene" id="TraesCS1A02G326800.1">
    <property type="protein sequence ID" value="TraesCS1A02G326800.1.cds1"/>
    <property type="gene ID" value="TraesCS1A02G326800"/>
</dbReference>
<dbReference type="Gramene" id="TraesCS1A03G0810500.1">
    <property type="protein sequence ID" value="TraesCS1A03G0810500.1.CDS1"/>
    <property type="gene ID" value="TraesCS1A03G0810500"/>
</dbReference>
<dbReference type="Gramene" id="TraesJUL1A03G00145280.1">
    <property type="protein sequence ID" value="TraesJUL1A03G00145280.1.CDS1"/>
    <property type="gene ID" value="TraesJUL1A03G00145280"/>
</dbReference>
<dbReference type="Gramene" id="TraesKAR1A01G0324550.1">
    <property type="protein sequence ID" value="cds.TraesKAR1A01G0324550.1"/>
    <property type="gene ID" value="TraesKAR1A01G0324550"/>
</dbReference>
<dbReference type="Gramene" id="TraesMAC1A03G00143530.1">
    <property type="protein sequence ID" value="TraesMAC1A03G00143530.1.CDS1"/>
    <property type="gene ID" value="TraesMAC1A03G00143530"/>
</dbReference>
<dbReference type="Gramene" id="TraesNOR1A03G00143170.1">
    <property type="protein sequence ID" value="TraesNOR1A03G00143170.1.CDS1"/>
    <property type="gene ID" value="TraesNOR1A03G00143170"/>
</dbReference>
<dbReference type="Gramene" id="TraesROB_scaffold_060582_01G000700.1">
    <property type="protein sequence ID" value="TraesROB_scaffold_060582_01G000700.1"/>
    <property type="gene ID" value="TraesROB_scaffold_060582_01G000700"/>
</dbReference>
<dbReference type="Gramene" id="TraesSYM1A03G00145820.1">
    <property type="protein sequence ID" value="TraesSYM1A03G00145820.1.CDS1"/>
    <property type="gene ID" value="TraesSYM1A03G00145820"/>
</dbReference>
<dbReference type="Gramene" id="TraesWEE_scaffold_003839_01G001400.1">
    <property type="protein sequence ID" value="TraesWEE_scaffold_003839_01G001400.1"/>
    <property type="gene ID" value="TraesWEE_scaffold_003839_01G001400"/>
</dbReference>
<dbReference type="eggNOG" id="ENOG502S7G0">
    <property type="taxonomic scope" value="Eukaryota"/>
</dbReference>
<dbReference type="HOGENOM" id="CLU_112193_0_0_1"/>
<dbReference type="OMA" id="TCTNNQC"/>
<dbReference type="OrthoDB" id="617225at2759"/>
<dbReference type="EvolutionaryTrace" id="P10968"/>
<dbReference type="PRO" id="PR:P10968"/>
<dbReference type="Proteomes" id="UP000019116">
    <property type="component" value="Chromosome 1A"/>
</dbReference>
<dbReference type="GO" id="GO:0030246">
    <property type="term" value="F:carbohydrate binding"/>
    <property type="evidence" value="ECO:0007669"/>
    <property type="project" value="UniProtKB-KW"/>
</dbReference>
<dbReference type="GO" id="GO:0008061">
    <property type="term" value="F:chitin binding"/>
    <property type="evidence" value="ECO:0007669"/>
    <property type="project" value="UniProtKB-KW"/>
</dbReference>
<dbReference type="CDD" id="cd00035">
    <property type="entry name" value="ChtBD1"/>
    <property type="match status" value="4"/>
</dbReference>
<dbReference type="FunFam" id="3.30.60.10:FF:000006">
    <property type="entry name" value="Agglutinin isolectin 1"/>
    <property type="match status" value="1"/>
</dbReference>
<dbReference type="Gene3D" id="3.30.60.10">
    <property type="entry name" value="Endochitinase-like"/>
    <property type="match status" value="4"/>
</dbReference>
<dbReference type="InterPro" id="IPR001002">
    <property type="entry name" value="Chitin-bd_1"/>
</dbReference>
<dbReference type="InterPro" id="IPR018371">
    <property type="entry name" value="Chitin-binding_1_CS"/>
</dbReference>
<dbReference type="InterPro" id="IPR036861">
    <property type="entry name" value="Endochitinase-like_sf"/>
</dbReference>
<dbReference type="PANTHER" id="PTHR47849">
    <property type="entry name" value="CHITIN-BINDING LECTIN 1"/>
    <property type="match status" value="1"/>
</dbReference>
<dbReference type="PANTHER" id="PTHR47849:SF11">
    <property type="entry name" value="CHITIN-BINDING TYPE-1 DOMAIN-CONTAINING PROTEIN"/>
    <property type="match status" value="1"/>
</dbReference>
<dbReference type="Pfam" id="PF00187">
    <property type="entry name" value="Chitin_bind_1"/>
    <property type="match status" value="4"/>
</dbReference>
<dbReference type="PRINTS" id="PR00451">
    <property type="entry name" value="CHITINBINDNG"/>
</dbReference>
<dbReference type="SMART" id="SM00270">
    <property type="entry name" value="ChtBD1"/>
    <property type="match status" value="4"/>
</dbReference>
<dbReference type="SUPFAM" id="SSF57016">
    <property type="entry name" value="Plant lectins/antimicrobial peptides"/>
    <property type="match status" value="4"/>
</dbReference>
<dbReference type="PROSITE" id="PS00026">
    <property type="entry name" value="CHIT_BIND_I_1"/>
    <property type="match status" value="4"/>
</dbReference>
<dbReference type="PROSITE" id="PS50941">
    <property type="entry name" value="CHIT_BIND_I_2"/>
    <property type="match status" value="4"/>
</dbReference>
<comment type="function">
    <text>N-acetyl-D-glucosamine / N-acetyl-D-neuraminic acid binding lectin.</text>
</comment>
<comment type="subunit">
    <text evidence="2">Homodimer, u-shaped.</text>
</comment>
<comment type="miscellaneous">
    <text>The 4 sites proposed for binding to carbohydrates (N-acetyl-D-glucosamine) of receptor molecules are on the surface of the agglutinin molecule.</text>
</comment>
<reference key="1">
    <citation type="journal article" date="1989" name="Plant Mol. Biol.">
        <title>Nucleotide sequences of cDNA clones encoding wheat germ agglutinin isolectins A and D.</title>
        <authorList>
            <person name="Smith J.J."/>
            <person name="Raikhel N.V."/>
        </authorList>
    </citation>
    <scope>NUCLEOTIDE SEQUENCE [MRNA]</scope>
</reference>
<reference key="2">
    <citation type="journal article" date="1989" name="J. Mol. Evol.">
        <title>Sequence variability in three wheat germ agglutinin isolectins: products of multiple genes in polyploid wheat.</title>
        <authorList>
            <person name="Wright C.S."/>
            <person name="Raikhel N.V."/>
        </authorList>
    </citation>
    <scope>PROTEIN SEQUENCE OF 27-197</scope>
    <source>
        <tissue>Germ</tissue>
    </source>
</reference>
<reference key="3">
    <citation type="journal article" date="1989" name="J. Mol. Biol.">
        <title>Comparison of the refined crystal structures of two wheat germ isolectins.</title>
        <authorList>
            <person name="Wright C.S."/>
        </authorList>
    </citation>
    <scope>X-RAY CRYSTALLOGRAPHY (1.8 ANGSTROMS) OF 27-197</scope>
    <scope>PYROGLUTAMATE FORMATION AT GLN-27</scope>
</reference>
<reference key="4">
    <citation type="journal article" date="1990" name="J. Mol. Biol.">
        <title>2.2-A resolution structure analysis of two refined N-acetylneuraminyl-lactose-wheat germ agglutinin isolectin complexes.</title>
        <authorList>
            <person name="Wright C.S."/>
        </authorList>
    </citation>
    <scope>X-RAY CRYSTALLOGRAPHY (2.2 ANGSTROMS) IN COMPLEX WITH N-ACETYLNEURAMINYL-LACTOSE</scope>
</reference>
<sequence>MKMMSTRALALGAAAVLAFAAATAQAQRCGEQGSNMECPNNLCCSQYGYCGMGGDYCGKGCQNGACWTSKRCGSQAGGATCTNNQCCSQYGYCGFGAEYCGAGCQGGPCRADIKCGSQAGGKLCPNNLCCSQWGFCGLGSEFCGGGCQSGACSTDKPCGKDAGGRVCTNNYCCSKWGSCGIGPGYCGAGCQSGGCDGVFAEAITANSTLLQE</sequence>
<evidence type="ECO:0000255" key="1">
    <source>
        <dbReference type="PROSITE-ProRule" id="PRU00261"/>
    </source>
</evidence>
<evidence type="ECO:0000269" key="2">
    <source>
    </source>
</evidence>
<evidence type="ECO:0000269" key="3">
    <source>
    </source>
</evidence>
<evidence type="ECO:0000269" key="4">
    <source>
    </source>
</evidence>
<evidence type="ECO:0000305" key="5"/>
<evidence type="ECO:0007829" key="6">
    <source>
        <dbReference type="PDB" id="2CWG"/>
    </source>
</evidence>
<evidence type="ECO:0007829" key="7">
    <source>
        <dbReference type="PDB" id="2UVO"/>
    </source>
</evidence>
<evidence type="ECO:0007829" key="8">
    <source>
        <dbReference type="PDB" id="2X3T"/>
    </source>
</evidence>
<evidence type="ECO:0007829" key="9">
    <source>
        <dbReference type="PDB" id="4AML"/>
    </source>
</evidence>
<protein>
    <recommendedName>
        <fullName>Agglutinin isolectin 1</fullName>
    </recommendedName>
    <alternativeName>
        <fullName>Isolectin A</fullName>
    </alternativeName>
    <alternativeName>
        <fullName>WGA1</fullName>
    </alternativeName>
</protein>
<accession>P10968</accession>
<keyword id="KW-0002">3D-structure</keyword>
<keyword id="KW-0147">Chitin-binding</keyword>
<keyword id="KW-0903">Direct protein sequencing</keyword>
<keyword id="KW-1015">Disulfide bond</keyword>
<keyword id="KW-0430">Lectin</keyword>
<keyword id="KW-0873">Pyrrolidone carboxylic acid</keyword>
<keyword id="KW-1185">Reference proteome</keyword>
<keyword id="KW-0677">Repeat</keyword>
<keyword id="KW-0732">Signal</keyword>
<name>AGI1_WHEAT</name>
<feature type="signal peptide" evidence="3">
    <location>
        <begin position="1"/>
        <end position="26"/>
    </location>
</feature>
<feature type="chain" id="PRO_0000005255" description="Agglutinin isolectin 1">
    <location>
        <begin position="27"/>
        <end position="197"/>
    </location>
</feature>
<feature type="propeptide" id="PRO_0000005256">
    <location>
        <begin position="198"/>
        <end position="212"/>
    </location>
</feature>
<feature type="domain" description="Chitin-binding type-1 1" evidence="1">
    <location>
        <begin position="27"/>
        <end position="68"/>
    </location>
</feature>
<feature type="domain" description="Chitin-binding type-1 2" evidence="1">
    <location>
        <begin position="69"/>
        <end position="111"/>
    </location>
</feature>
<feature type="domain" description="Chitin-binding type-1 3" evidence="1">
    <location>
        <begin position="112"/>
        <end position="154"/>
    </location>
</feature>
<feature type="domain" description="Chitin-binding type-1 4" evidence="1">
    <location>
        <begin position="155"/>
        <end position="197"/>
    </location>
</feature>
<feature type="binding site">
    <location>
        <begin position="36"/>
        <end position="38"/>
    </location>
    <ligand>
        <name>substrate</name>
    </ligand>
</feature>
<feature type="binding site">
    <location>
        <begin position="88"/>
        <end position="99"/>
    </location>
    <ligand>
        <name>substrate</name>
    </ligand>
</feature>
<feature type="binding site">
    <location>
        <begin position="140"/>
        <end position="141"/>
    </location>
    <ligand>
        <name>substrate</name>
    </ligand>
</feature>
<feature type="modified residue" description="Pyrrolidone carboxylic acid" evidence="4">
    <location>
        <position position="27"/>
    </location>
</feature>
<feature type="disulfide bond">
    <location>
        <begin position="29"/>
        <end position="44"/>
    </location>
</feature>
<feature type="disulfide bond">
    <location>
        <begin position="38"/>
        <end position="50"/>
    </location>
</feature>
<feature type="disulfide bond">
    <location>
        <begin position="43"/>
        <end position="57"/>
    </location>
</feature>
<feature type="disulfide bond">
    <location>
        <begin position="61"/>
        <end position="66"/>
    </location>
</feature>
<feature type="disulfide bond">
    <location>
        <begin position="72"/>
        <end position="87"/>
    </location>
</feature>
<feature type="disulfide bond">
    <location>
        <begin position="81"/>
        <end position="93"/>
    </location>
</feature>
<feature type="disulfide bond">
    <location>
        <begin position="86"/>
        <end position="100"/>
    </location>
</feature>
<feature type="disulfide bond">
    <location>
        <begin position="104"/>
        <end position="109"/>
    </location>
</feature>
<feature type="disulfide bond">
    <location>
        <begin position="115"/>
        <end position="130"/>
    </location>
</feature>
<feature type="disulfide bond">
    <location>
        <begin position="124"/>
        <end position="136"/>
    </location>
</feature>
<feature type="disulfide bond">
    <location>
        <begin position="129"/>
        <end position="143"/>
    </location>
</feature>
<feature type="disulfide bond">
    <location>
        <begin position="147"/>
        <end position="152"/>
    </location>
</feature>
<feature type="disulfide bond">
    <location>
        <begin position="158"/>
        <end position="173"/>
    </location>
</feature>
<feature type="disulfide bond">
    <location>
        <begin position="167"/>
        <end position="179"/>
    </location>
</feature>
<feature type="disulfide bond">
    <location>
        <begin position="172"/>
        <end position="186"/>
    </location>
</feature>
<feature type="disulfide bond">
    <location>
        <begin position="190"/>
        <end position="195"/>
    </location>
</feature>
<feature type="sequence conflict" description="In Ref. 2; AA sequence." evidence="5" ref="2">
    <original>N</original>
    <variation>D</variation>
    <location>
        <position position="63"/>
    </location>
</feature>
<feature type="helix" evidence="7">
    <location>
        <begin position="30"/>
        <end position="33"/>
    </location>
</feature>
<feature type="helix" evidence="7">
    <location>
        <begin position="39"/>
        <end position="41"/>
    </location>
</feature>
<feature type="strand" evidence="7">
    <location>
        <begin position="48"/>
        <end position="53"/>
    </location>
</feature>
<feature type="helix" evidence="7">
    <location>
        <begin position="54"/>
        <end position="57"/>
    </location>
</feature>
<feature type="strand" evidence="7">
    <location>
        <begin position="63"/>
        <end position="65"/>
    </location>
</feature>
<feature type="helix" evidence="7">
    <location>
        <begin position="73"/>
        <end position="76"/>
    </location>
</feature>
<feature type="helix" evidence="6">
    <location>
        <begin position="82"/>
        <end position="84"/>
    </location>
</feature>
<feature type="strand" evidence="7">
    <location>
        <begin position="91"/>
        <end position="96"/>
    </location>
</feature>
<feature type="helix" evidence="7">
    <location>
        <begin position="97"/>
        <end position="100"/>
    </location>
</feature>
<feature type="strand" evidence="7">
    <location>
        <begin position="106"/>
        <end position="108"/>
    </location>
</feature>
<feature type="helix" evidence="7">
    <location>
        <begin position="116"/>
        <end position="119"/>
    </location>
</feature>
<feature type="helix" evidence="7">
    <location>
        <begin position="125"/>
        <end position="127"/>
    </location>
</feature>
<feature type="strand" evidence="7">
    <location>
        <begin position="134"/>
        <end position="139"/>
    </location>
</feature>
<feature type="helix" evidence="7">
    <location>
        <begin position="140"/>
        <end position="143"/>
    </location>
</feature>
<feature type="strand" evidence="8">
    <location>
        <begin position="144"/>
        <end position="146"/>
    </location>
</feature>
<feature type="strand" evidence="7">
    <location>
        <begin position="149"/>
        <end position="151"/>
    </location>
</feature>
<feature type="turn" evidence="7">
    <location>
        <begin position="160"/>
        <end position="164"/>
    </location>
</feature>
<feature type="helix" evidence="9">
    <location>
        <begin position="168"/>
        <end position="170"/>
    </location>
</feature>
<feature type="strand" evidence="7">
    <location>
        <begin position="179"/>
        <end position="182"/>
    </location>
</feature>
<feature type="helix" evidence="7">
    <location>
        <begin position="183"/>
        <end position="186"/>
    </location>
</feature>
<feature type="strand" evidence="7">
    <location>
        <begin position="192"/>
        <end position="194"/>
    </location>
</feature>
<organism>
    <name type="scientific">Triticum aestivum</name>
    <name type="common">Wheat</name>
    <dbReference type="NCBI Taxonomy" id="4565"/>
    <lineage>
        <taxon>Eukaryota</taxon>
        <taxon>Viridiplantae</taxon>
        <taxon>Streptophyta</taxon>
        <taxon>Embryophyta</taxon>
        <taxon>Tracheophyta</taxon>
        <taxon>Spermatophyta</taxon>
        <taxon>Magnoliopsida</taxon>
        <taxon>Liliopsida</taxon>
        <taxon>Poales</taxon>
        <taxon>Poaceae</taxon>
        <taxon>BOP clade</taxon>
        <taxon>Pooideae</taxon>
        <taxon>Triticodae</taxon>
        <taxon>Triticeae</taxon>
        <taxon>Triticinae</taxon>
        <taxon>Triticum</taxon>
    </lineage>
</organism>